<comment type="function">
    <text evidence="1">Catalyzes the dehydration of methylthioribulose-1-phosphate (MTRu-1-P) into 2,3-diketo-5-methylthiopentyl-1-phosphate (DK-MTP-1-P).</text>
</comment>
<comment type="catalytic activity">
    <reaction evidence="1">
        <text>5-(methylsulfanyl)-D-ribulose 1-phosphate = 5-methylsulfanyl-2,3-dioxopentyl phosphate + H2O</text>
        <dbReference type="Rhea" id="RHEA:15549"/>
        <dbReference type="ChEBI" id="CHEBI:15377"/>
        <dbReference type="ChEBI" id="CHEBI:58548"/>
        <dbReference type="ChEBI" id="CHEBI:58828"/>
        <dbReference type="EC" id="4.2.1.109"/>
    </reaction>
</comment>
<comment type="cofactor">
    <cofactor evidence="1">
        <name>Zn(2+)</name>
        <dbReference type="ChEBI" id="CHEBI:29105"/>
    </cofactor>
    <text evidence="1">Binds 1 zinc ion per subunit.</text>
</comment>
<comment type="pathway">
    <text evidence="1">Amino-acid biosynthesis; L-methionine biosynthesis via salvage pathway; L-methionine from S-methyl-5-thio-alpha-D-ribose 1-phosphate: step 2/6.</text>
</comment>
<comment type="subcellular location">
    <subcellularLocation>
        <location evidence="1">Cytoplasm</location>
    </subcellularLocation>
</comment>
<comment type="similarity">
    <text evidence="1">Belongs to the aldolase class II family. MtnB subfamily.</text>
</comment>
<reference key="1">
    <citation type="journal article" date="2015" name="PLoS Genet.">
        <title>The dynamic genome and transcriptome of the human fungal pathogen Blastomyces and close relative Emmonsia.</title>
        <authorList>
            <person name="Munoz J.F."/>
            <person name="Gauthier G.M."/>
            <person name="Desjardins C.A."/>
            <person name="Gallo J.E."/>
            <person name="Holder J."/>
            <person name="Sullivan T.D."/>
            <person name="Marty A.J."/>
            <person name="Carmen J.C."/>
            <person name="Chen Z."/>
            <person name="Ding L."/>
            <person name="Gujja S."/>
            <person name="Magrini V."/>
            <person name="Misas E."/>
            <person name="Mitreva M."/>
            <person name="Priest M."/>
            <person name="Saif S."/>
            <person name="Whiston E.A."/>
            <person name="Young S."/>
            <person name="Zeng Q."/>
            <person name="Goldman W.E."/>
            <person name="Mardis E.R."/>
            <person name="Taylor J.W."/>
            <person name="McEwen J.G."/>
            <person name="Clay O.K."/>
            <person name="Klein B.S."/>
            <person name="Cuomo C.A."/>
        </authorList>
    </citation>
    <scope>NUCLEOTIDE SEQUENCE [LARGE SCALE GENOMIC DNA]</scope>
    <source>
        <strain>SLH14081</strain>
    </source>
</reference>
<gene>
    <name evidence="1" type="primary">MDE1</name>
    <name type="ORF">BDBG_02251</name>
</gene>
<name>MTNB_BLAGS</name>
<sequence length="241" mass="27013">MSAIKDERNNDHLVQSHDPEHPANLIPALCRNFYGHGWVTGTGGGASIKRDNHIFIAPSGVQKELIQPHNIFVLQYPTPKYPPSARQYIRKPLELKPSACTPLFLAAFDRGAGCCIHTHSQWAVLVTLLVEREKGLEGCFEISNIEQIKGIPKGKGKGMMGFFDTLKIPIIENTAFEEDLTSSLEEAMEKYPDTYAVLVRRHGIYVWGDDVAKAKTQCESLDYLFQLAVEMHKLGLPWVKP</sequence>
<evidence type="ECO:0000255" key="1">
    <source>
        <dbReference type="HAMAP-Rule" id="MF_03116"/>
    </source>
</evidence>
<evidence type="ECO:0000256" key="2">
    <source>
        <dbReference type="SAM" id="MobiDB-lite"/>
    </source>
</evidence>
<accession>C5JIC2</accession>
<accession>A0A179UG16</accession>
<protein>
    <recommendedName>
        <fullName evidence="1">Methylthioribulose-1-phosphate dehydratase</fullName>
        <shortName evidence="1">MTRu-1-P dehydratase</shortName>
        <ecNumber evidence="1">4.2.1.109</ecNumber>
    </recommendedName>
</protein>
<feature type="chain" id="PRO_0000393803" description="Methylthioribulose-1-phosphate dehydratase">
    <location>
        <begin position="1"/>
        <end position="241"/>
    </location>
</feature>
<feature type="region of interest" description="Disordered" evidence="2">
    <location>
        <begin position="1"/>
        <end position="20"/>
    </location>
</feature>
<feature type="active site" description="Proton donor/acceptor" evidence="1">
    <location>
        <position position="146"/>
    </location>
</feature>
<feature type="binding site" evidence="1">
    <location>
        <position position="100"/>
    </location>
    <ligand>
        <name>substrate</name>
    </ligand>
</feature>
<feature type="binding site" evidence="1">
    <location>
        <position position="117"/>
    </location>
    <ligand>
        <name>Zn(2+)</name>
        <dbReference type="ChEBI" id="CHEBI:29105"/>
    </ligand>
</feature>
<feature type="binding site" evidence="1">
    <location>
        <position position="119"/>
    </location>
    <ligand>
        <name>Zn(2+)</name>
        <dbReference type="ChEBI" id="CHEBI:29105"/>
    </ligand>
</feature>
<feature type="binding site" evidence="1">
    <location>
        <position position="202"/>
    </location>
    <ligand>
        <name>Zn(2+)</name>
        <dbReference type="ChEBI" id="CHEBI:29105"/>
    </ligand>
</feature>
<dbReference type="EC" id="4.2.1.109" evidence="1"/>
<dbReference type="EMBL" id="GG657450">
    <property type="protein sequence ID" value="OAT05951.1"/>
    <property type="molecule type" value="Genomic_DNA"/>
</dbReference>
<dbReference type="RefSeq" id="XP_002627580.1">
    <property type="nucleotide sequence ID" value="XM_002627534.1"/>
</dbReference>
<dbReference type="SMR" id="C5JIC2"/>
<dbReference type="STRING" id="559298.C5JIC2"/>
<dbReference type="GeneID" id="8506638"/>
<dbReference type="KEGG" id="bgh:BDBG_02251"/>
<dbReference type="VEuPathDB" id="FungiDB:BDBG_02251"/>
<dbReference type="HOGENOM" id="CLU_006033_4_0_1"/>
<dbReference type="OrthoDB" id="191080at2759"/>
<dbReference type="UniPathway" id="UPA00904">
    <property type="reaction ID" value="UER00875"/>
</dbReference>
<dbReference type="Proteomes" id="UP000002038">
    <property type="component" value="Unassembled WGS sequence"/>
</dbReference>
<dbReference type="GO" id="GO:0005737">
    <property type="term" value="C:cytoplasm"/>
    <property type="evidence" value="ECO:0007669"/>
    <property type="project" value="UniProtKB-SubCell"/>
</dbReference>
<dbReference type="GO" id="GO:0046570">
    <property type="term" value="F:methylthioribulose 1-phosphate dehydratase activity"/>
    <property type="evidence" value="ECO:0007669"/>
    <property type="project" value="UniProtKB-UniRule"/>
</dbReference>
<dbReference type="GO" id="GO:0008270">
    <property type="term" value="F:zinc ion binding"/>
    <property type="evidence" value="ECO:0007669"/>
    <property type="project" value="UniProtKB-UniRule"/>
</dbReference>
<dbReference type="GO" id="GO:0019509">
    <property type="term" value="P:L-methionine salvage from methylthioadenosine"/>
    <property type="evidence" value="ECO:0007669"/>
    <property type="project" value="UniProtKB-UniRule"/>
</dbReference>
<dbReference type="FunFam" id="3.40.225.10:FF:000003">
    <property type="entry name" value="Methylthioribulose-1-phosphate dehydratase"/>
    <property type="match status" value="1"/>
</dbReference>
<dbReference type="Gene3D" id="3.40.225.10">
    <property type="entry name" value="Class II aldolase/adducin N-terminal domain"/>
    <property type="match status" value="1"/>
</dbReference>
<dbReference type="HAMAP" id="MF_03116">
    <property type="entry name" value="Salvage_MtnB_euk"/>
    <property type="match status" value="1"/>
</dbReference>
<dbReference type="InterPro" id="IPR001303">
    <property type="entry name" value="Aldolase_II/adducin_N"/>
</dbReference>
<dbReference type="InterPro" id="IPR036409">
    <property type="entry name" value="Aldolase_II/adducin_N_sf"/>
</dbReference>
<dbReference type="InterPro" id="IPR017714">
    <property type="entry name" value="MethylthioRu-1-P_deHdtase_MtnB"/>
</dbReference>
<dbReference type="InterPro" id="IPR027514">
    <property type="entry name" value="Salvage_MtnB_euk"/>
</dbReference>
<dbReference type="NCBIfam" id="TIGR03328">
    <property type="entry name" value="salvage_mtnB"/>
    <property type="match status" value="1"/>
</dbReference>
<dbReference type="PANTHER" id="PTHR10640">
    <property type="entry name" value="METHYLTHIORIBULOSE-1-PHOSPHATE DEHYDRATASE"/>
    <property type="match status" value="1"/>
</dbReference>
<dbReference type="PANTHER" id="PTHR10640:SF7">
    <property type="entry name" value="METHYLTHIORIBULOSE-1-PHOSPHATE DEHYDRATASE"/>
    <property type="match status" value="1"/>
</dbReference>
<dbReference type="Pfam" id="PF00596">
    <property type="entry name" value="Aldolase_II"/>
    <property type="match status" value="1"/>
</dbReference>
<dbReference type="SMART" id="SM01007">
    <property type="entry name" value="Aldolase_II"/>
    <property type="match status" value="1"/>
</dbReference>
<dbReference type="SUPFAM" id="SSF53639">
    <property type="entry name" value="AraD/HMP-PK domain-like"/>
    <property type="match status" value="1"/>
</dbReference>
<proteinExistence type="inferred from homology"/>
<keyword id="KW-0028">Amino-acid biosynthesis</keyword>
<keyword id="KW-0963">Cytoplasm</keyword>
<keyword id="KW-0456">Lyase</keyword>
<keyword id="KW-0479">Metal-binding</keyword>
<keyword id="KW-0486">Methionine biosynthesis</keyword>
<keyword id="KW-1185">Reference proteome</keyword>
<keyword id="KW-0862">Zinc</keyword>
<organism>
    <name type="scientific">Blastomyces gilchristii (strain SLH14081)</name>
    <name type="common">Blastomyces dermatitidis</name>
    <dbReference type="NCBI Taxonomy" id="559298"/>
    <lineage>
        <taxon>Eukaryota</taxon>
        <taxon>Fungi</taxon>
        <taxon>Dikarya</taxon>
        <taxon>Ascomycota</taxon>
        <taxon>Pezizomycotina</taxon>
        <taxon>Eurotiomycetes</taxon>
        <taxon>Eurotiomycetidae</taxon>
        <taxon>Onygenales</taxon>
        <taxon>Ajellomycetaceae</taxon>
        <taxon>Blastomyces</taxon>
    </lineage>
</organism>